<organism>
    <name type="scientific">Shigella boydii serotype 4 (strain Sb227)</name>
    <dbReference type="NCBI Taxonomy" id="300268"/>
    <lineage>
        <taxon>Bacteria</taxon>
        <taxon>Pseudomonadati</taxon>
        <taxon>Pseudomonadota</taxon>
        <taxon>Gammaproteobacteria</taxon>
        <taxon>Enterobacterales</taxon>
        <taxon>Enterobacteriaceae</taxon>
        <taxon>Shigella</taxon>
    </lineage>
</organism>
<accession>Q31ZB5</accession>
<dbReference type="EC" id="1.5.3.-" evidence="1"/>
<dbReference type="EMBL" id="CP000036">
    <property type="protein sequence ID" value="ABB66593.1"/>
    <property type="molecule type" value="Genomic_DNA"/>
</dbReference>
<dbReference type="RefSeq" id="WP_000872815.1">
    <property type="nucleotide sequence ID" value="NC_007613.1"/>
</dbReference>
<dbReference type="SMR" id="Q31ZB5"/>
<dbReference type="KEGG" id="sbo:SBO_2005"/>
<dbReference type="HOGENOM" id="CLU_007884_2_1_6"/>
<dbReference type="Proteomes" id="UP000007067">
    <property type="component" value="Chromosome"/>
</dbReference>
<dbReference type="GO" id="GO:0005829">
    <property type="term" value="C:cytosol"/>
    <property type="evidence" value="ECO:0007669"/>
    <property type="project" value="TreeGrafter"/>
</dbReference>
<dbReference type="GO" id="GO:0050660">
    <property type="term" value="F:flavin adenine dinucleotide binding"/>
    <property type="evidence" value="ECO:0007669"/>
    <property type="project" value="InterPro"/>
</dbReference>
<dbReference type="GO" id="GO:0050131">
    <property type="term" value="F:N-methyl-L-amino-acid oxidase activity"/>
    <property type="evidence" value="ECO:0007669"/>
    <property type="project" value="InterPro"/>
</dbReference>
<dbReference type="GO" id="GO:0008115">
    <property type="term" value="F:sarcosine oxidase activity"/>
    <property type="evidence" value="ECO:0007669"/>
    <property type="project" value="TreeGrafter"/>
</dbReference>
<dbReference type="Gene3D" id="3.30.9.10">
    <property type="entry name" value="D-Amino Acid Oxidase, subunit A, domain 2"/>
    <property type="match status" value="1"/>
</dbReference>
<dbReference type="Gene3D" id="3.50.50.60">
    <property type="entry name" value="FAD/NAD(P)-binding domain"/>
    <property type="match status" value="1"/>
</dbReference>
<dbReference type="HAMAP" id="MF_00515">
    <property type="entry name" value="MTOX"/>
    <property type="match status" value="1"/>
</dbReference>
<dbReference type="InterPro" id="IPR006076">
    <property type="entry name" value="FAD-dep_OxRdtase"/>
</dbReference>
<dbReference type="InterPro" id="IPR036188">
    <property type="entry name" value="FAD/NAD-bd_sf"/>
</dbReference>
<dbReference type="InterPro" id="IPR023493">
    <property type="entry name" value="Me_Trp_Oxase_MTOX"/>
</dbReference>
<dbReference type="InterPro" id="IPR045170">
    <property type="entry name" value="MTOX"/>
</dbReference>
<dbReference type="NCBIfam" id="NF008425">
    <property type="entry name" value="PRK11259.1"/>
    <property type="match status" value="1"/>
</dbReference>
<dbReference type="PANTHER" id="PTHR10961:SF7">
    <property type="entry name" value="FAD DEPENDENT OXIDOREDUCTASE DOMAIN-CONTAINING PROTEIN"/>
    <property type="match status" value="1"/>
</dbReference>
<dbReference type="PANTHER" id="PTHR10961">
    <property type="entry name" value="PEROXISOMAL SARCOSINE OXIDASE"/>
    <property type="match status" value="1"/>
</dbReference>
<dbReference type="Pfam" id="PF01266">
    <property type="entry name" value="DAO"/>
    <property type="match status" value="1"/>
</dbReference>
<dbReference type="SUPFAM" id="SSF54373">
    <property type="entry name" value="FAD-linked reductases, C-terminal domain"/>
    <property type="match status" value="1"/>
</dbReference>
<dbReference type="SUPFAM" id="SSF51905">
    <property type="entry name" value="FAD/NAD(P)-binding domain"/>
    <property type="match status" value="1"/>
</dbReference>
<comment type="function">
    <text evidence="1">Catalyzes the oxidative demethylation of N-methyl-L-tryptophan.</text>
</comment>
<comment type="catalytic activity">
    <reaction evidence="1">
        <text>N(alpha)-methyl-L-tryptophan + O2 + H2O = L-tryptophan + formaldehyde + H2O2</text>
        <dbReference type="Rhea" id="RHEA:28006"/>
        <dbReference type="ChEBI" id="CHEBI:15377"/>
        <dbReference type="ChEBI" id="CHEBI:15379"/>
        <dbReference type="ChEBI" id="CHEBI:16240"/>
        <dbReference type="ChEBI" id="CHEBI:16842"/>
        <dbReference type="ChEBI" id="CHEBI:57283"/>
        <dbReference type="ChEBI" id="CHEBI:57912"/>
    </reaction>
</comment>
<comment type="cofactor">
    <cofactor evidence="1">
        <name>FAD</name>
        <dbReference type="ChEBI" id="CHEBI:57692"/>
    </cofactor>
    <text evidence="1">Binds 1 FAD per subunit.</text>
</comment>
<comment type="subunit">
    <text evidence="1">Monomer.</text>
</comment>
<comment type="similarity">
    <text evidence="1">Belongs to the MSOX/MTOX family. MTOX subfamily.</text>
</comment>
<protein>
    <recommendedName>
        <fullName evidence="1">N-methyl-L-tryptophan oxidase</fullName>
        <shortName evidence="1">MTOX</shortName>
        <ecNumber evidence="1">1.5.3.-</ecNumber>
    </recommendedName>
</protein>
<proteinExistence type="inferred from homology"/>
<gene>
    <name evidence="1" type="primary">solA</name>
    <name type="ordered locus">SBO_2005</name>
</gene>
<sequence>MKYDLIIIGSGSVGAAAGYYATRAGLNVLMTDAHMPPHQHGSHHGDTRLIRHAYGEGEKYVPLVLRAQTLWDELSRHNEDDPIFVRSGVINLGPADSAFLANVAHSAEQWQLNVEKLDAQGIMARWPEIRVPDNYIGLFETDSGFLRSELAIKTWIQLAKEAGCAQLFNCPVTAIRHDDDGVTIETVDGEYQAKKAIVCAGTWVKDLLPELPVQPVRKVFAWYQADGRYSVKNKFPAFTGELPNGDQYYGFPAENDALKIGKHNGGQVIHSADERVPFAEVVSDGSEAFPFLRNVLPGIGCCLYGAACTYDNSPDEDFIIDTLPGHDNTLLITGLSGHGFKFASVLGEIAADFAQDKKSDFDLTPFRLSRFQ</sequence>
<feature type="chain" id="PRO_0000259023" description="N-methyl-L-tryptophan oxidase">
    <location>
        <begin position="1"/>
        <end position="372"/>
    </location>
</feature>
<feature type="binding site" evidence="1">
    <location>
        <begin position="4"/>
        <end position="34"/>
    </location>
    <ligand>
        <name>FAD</name>
        <dbReference type="ChEBI" id="CHEBI:57692"/>
    </ligand>
</feature>
<feature type="modified residue" description="S-8alpha-FAD cysteine" evidence="1">
    <location>
        <position position="308"/>
    </location>
</feature>
<reference key="1">
    <citation type="journal article" date="2005" name="Nucleic Acids Res.">
        <title>Genome dynamics and diversity of Shigella species, the etiologic agents of bacillary dysentery.</title>
        <authorList>
            <person name="Yang F."/>
            <person name="Yang J."/>
            <person name="Zhang X."/>
            <person name="Chen L."/>
            <person name="Jiang Y."/>
            <person name="Yan Y."/>
            <person name="Tang X."/>
            <person name="Wang J."/>
            <person name="Xiong Z."/>
            <person name="Dong J."/>
            <person name="Xue Y."/>
            <person name="Zhu Y."/>
            <person name="Xu X."/>
            <person name="Sun L."/>
            <person name="Chen S."/>
            <person name="Nie H."/>
            <person name="Peng J."/>
            <person name="Xu J."/>
            <person name="Wang Y."/>
            <person name="Yuan Z."/>
            <person name="Wen Y."/>
            <person name="Yao Z."/>
            <person name="Shen Y."/>
            <person name="Qiang B."/>
            <person name="Hou Y."/>
            <person name="Yu J."/>
            <person name="Jin Q."/>
        </authorList>
    </citation>
    <scope>NUCLEOTIDE SEQUENCE [LARGE SCALE GENOMIC DNA]</scope>
    <source>
        <strain>Sb227</strain>
    </source>
</reference>
<keyword id="KW-0274">FAD</keyword>
<keyword id="KW-0285">Flavoprotein</keyword>
<keyword id="KW-0560">Oxidoreductase</keyword>
<evidence type="ECO:0000255" key="1">
    <source>
        <dbReference type="HAMAP-Rule" id="MF_00515"/>
    </source>
</evidence>
<name>MTOX_SHIBS</name>